<proteinExistence type="evidence at protein level"/>
<keyword id="KW-0966">Cell projection</keyword>
<keyword id="KW-0969">Cilium</keyword>
<keyword id="KW-0175">Coiled coil</keyword>
<keyword id="KW-0963">Cytoplasm</keyword>
<keyword id="KW-0206">Cytoskeleton</keyword>
<keyword id="KW-0217">Developmental protein</keyword>
<keyword id="KW-0221">Differentiation</keyword>
<keyword id="KW-0282">Flagellum</keyword>
<keyword id="KW-0493">Microtubule</keyword>
<keyword id="KW-0597">Phosphoprotein</keyword>
<keyword id="KW-1185">Reference proteome</keyword>
<keyword id="KW-0744">Spermatogenesis</keyword>
<protein>
    <recommendedName>
        <fullName evidence="3 7">Outer dense fiber protein 2</fullName>
    </recommendedName>
    <alternativeName>
        <fullName evidence="3">84 kDa outer dense fiber protein</fullName>
    </alternativeName>
    <alternativeName>
        <fullName evidence="3">Cenexin</fullName>
    </alternativeName>
    <alternativeName>
        <fullName evidence="3">Outer dense fiber of sperm tails protein 2</fullName>
    </alternativeName>
</protein>
<reference evidence="6 7" key="1">
    <citation type="journal article" date="2010" name="Mol. Reprod. Dev.">
        <title>Inhibition of tyrosine phosphorylation of sperm flagellar proteins, outer dense fiber protein-2 and tektin-2, is associated with impaired motility during capacitation of hamster spermatozoa.</title>
        <authorList>
            <person name="Mariappa D."/>
            <person name="Aladakatti R.H."/>
            <person name="Dasari S.K."/>
            <person name="Sreekumar A."/>
            <person name="Wolkowicz M."/>
            <person name="van der Hoorn F."/>
            <person name="Seshagiri P.B."/>
        </authorList>
    </citation>
    <scope>NUCLEOTIDE SEQUENCE [MRNA]</scope>
    <scope>TISSUE SPECIFICITY</scope>
    <scope>PHOSPHORYLATION</scope>
    <scope>IDENTIFICATION BY MASS SPECTROMETRY</scope>
    <source>
        <tissue evidence="5">Testis</tissue>
    </source>
</reference>
<reference key="2">
    <citation type="journal article" date="2010" name="Asian J. Androl.">
        <title>Glucose-regulated protein precursor (GRP78) and tumor rejection antigen (GP96) are unique to hamster caput epididymal spermatozoa.</title>
        <authorList>
            <person name="Kameshwari D.B."/>
            <person name="Bhande S."/>
            <person name="Sundaram C.S."/>
            <person name="Kota V."/>
            <person name="Siva A.B."/>
            <person name="Shivaji S."/>
        </authorList>
    </citation>
    <scope>IDENTIFICATION BY MASS SPECTROMETRY</scope>
</reference>
<accession>Q2MJU7</accession>
<accession>P86236</accession>
<accession>P86266</accession>
<sequence>RTLRDLLREQHSKEDSERLMEQQGALLKRLAEADSEKARLLLLLQDKDKEVEELLQEIQCEKAQAKTASELSKSMESMRGHLQAQLRCKEAENSRLCMQIKNLERSGNQHKAEVEAIMEQLKEL</sequence>
<feature type="chain" id="PRO_0000394747" description="Outer dense fiber protein 2">
    <location>
        <begin position="1" status="less than"/>
        <end position="124" status="greater than"/>
    </location>
</feature>
<feature type="coiled-coil region" evidence="4">
    <location>
        <begin position="13"/>
        <end position="124"/>
    </location>
</feature>
<feature type="non-terminal residue" evidence="7">
    <location>
        <position position="1"/>
    </location>
</feature>
<feature type="non-terminal residue" evidence="7">
    <location>
        <position position="124"/>
    </location>
</feature>
<name>ODFP2_MESAU</name>
<comment type="function">
    <text evidence="2">Seems to be a major component of sperm tail outer dense fibers (ODF). ODFs are filamentous structures located on the outside of the axoneme in the midpiece and principal piece of the mammalian sperm tail and may help to maintain the passive elastic structures and elastic recoil of the sperm tail. May have a modulating influence on sperm motility. Functions as a general scaffold protein that is specifically localized at the distal/subdistal appendages of mother centrioles. Component of the centrosome matrix required for the localization of PLK1 and NIN to the centrosomes. Required for the formation and/or maintenance of normal CETN1 assembly (By similarity).</text>
</comment>
<comment type="subunit">
    <text evidence="1 2 3">Self-associates. Associates with microtubules and forms a fibrillar structure partially linked to the microtubule network. Interacts through its C-terminus with PLK1. Interacts with ODF1. Interacts with MARK4; the interaction is required for localization of ODF2 to centrioles. Interacts with TSSK4. Interacts with AKNA. Interacts with QRICH2 (By similarity). Interacts with CFAP58 (By similarity). Interacts with BBOF1 (By similarity). Interacts with CCDC38 (By similarity). Interacts with CCDC42 (By similarity).</text>
</comment>
<comment type="subcellular location">
    <subcellularLocation>
        <location evidence="3">Cytoplasm</location>
        <location evidence="3">Cytoskeleton</location>
        <location evidence="3">Microtubule organizing center</location>
        <location evidence="3">Centrosome</location>
    </subcellularLocation>
    <subcellularLocation>
        <location evidence="3">Cell projection</location>
        <location evidence="3">Cilium</location>
    </subcellularLocation>
    <subcellularLocation>
        <location evidence="3">Cytoplasm</location>
        <location evidence="3">Cytoskeleton</location>
        <location evidence="3">Microtubule organizing center</location>
        <location evidence="3">Centrosome</location>
        <location evidence="3">Centriole</location>
    </subcellularLocation>
    <subcellularLocation>
        <location evidence="3">Cytoplasm</location>
        <location evidence="3">Cytoskeleton</location>
        <location evidence="3">Spindle pole</location>
    </subcellularLocation>
    <subcellularLocation>
        <location evidence="1">Cell projection</location>
        <location evidence="1">Cilium</location>
        <location evidence="1">Flagellum</location>
    </subcellularLocation>
    <text evidence="1">Localized at the microtubule organizing centers in interphase and spindle poles in mitosis. Localized at the distal/subdistal appendages of mother centrioles.</text>
</comment>
<comment type="tissue specificity">
    <text evidence="5">Detected in sperm flagella (at protein level).</text>
</comment>
<comment type="PTM">
    <text evidence="5">Tyrosine phosphorylated.</text>
</comment>
<comment type="similarity">
    <text evidence="4">Belongs to the ODF2 family.</text>
</comment>
<organism>
    <name type="scientific">Mesocricetus auratus</name>
    <name type="common">Golden hamster</name>
    <dbReference type="NCBI Taxonomy" id="10036"/>
    <lineage>
        <taxon>Eukaryota</taxon>
        <taxon>Metazoa</taxon>
        <taxon>Chordata</taxon>
        <taxon>Craniata</taxon>
        <taxon>Vertebrata</taxon>
        <taxon>Euteleostomi</taxon>
        <taxon>Mammalia</taxon>
        <taxon>Eutheria</taxon>
        <taxon>Euarchontoglires</taxon>
        <taxon>Glires</taxon>
        <taxon>Rodentia</taxon>
        <taxon>Myomorpha</taxon>
        <taxon>Muroidea</taxon>
        <taxon>Cricetidae</taxon>
        <taxon>Cricetinae</taxon>
        <taxon>Mesocricetus</taxon>
    </lineage>
</organism>
<evidence type="ECO:0000250" key="1">
    <source>
        <dbReference type="UniProtKB" id="A3KGV1"/>
    </source>
</evidence>
<evidence type="ECO:0000250" key="2">
    <source>
        <dbReference type="UniProtKB" id="Q5BJF6"/>
    </source>
</evidence>
<evidence type="ECO:0000250" key="3">
    <source>
        <dbReference type="UniProtKB" id="Q6AYX5"/>
    </source>
</evidence>
<evidence type="ECO:0000255" key="4"/>
<evidence type="ECO:0000269" key="5">
    <source>
    </source>
</evidence>
<evidence type="ECO:0000305" key="6"/>
<evidence type="ECO:0000312" key="7">
    <source>
        <dbReference type="EMBL" id="ABC49850.1"/>
    </source>
</evidence>
<gene>
    <name evidence="3" type="primary">ODF2</name>
</gene>
<dbReference type="EMBL" id="DQ322652">
    <property type="protein sequence ID" value="ABC49850.1"/>
    <property type="molecule type" value="mRNA"/>
</dbReference>
<dbReference type="SMR" id="Q2MJU7"/>
<dbReference type="STRING" id="10036.ENSMAUP00000016252"/>
<dbReference type="eggNOG" id="ENOG502QUXQ">
    <property type="taxonomic scope" value="Eukaryota"/>
</dbReference>
<dbReference type="Proteomes" id="UP000189706">
    <property type="component" value="Unplaced"/>
</dbReference>
<dbReference type="GO" id="GO:0005814">
    <property type="term" value="C:centriole"/>
    <property type="evidence" value="ECO:0007669"/>
    <property type="project" value="UniProtKB-SubCell"/>
</dbReference>
<dbReference type="GO" id="GO:0005813">
    <property type="term" value="C:centrosome"/>
    <property type="evidence" value="ECO:0000250"/>
    <property type="project" value="UniProtKB"/>
</dbReference>
<dbReference type="GO" id="GO:0005737">
    <property type="term" value="C:cytoplasm"/>
    <property type="evidence" value="ECO:0007669"/>
    <property type="project" value="UniProtKB-KW"/>
</dbReference>
<dbReference type="GO" id="GO:0005874">
    <property type="term" value="C:microtubule"/>
    <property type="evidence" value="ECO:0007669"/>
    <property type="project" value="UniProtKB-KW"/>
</dbReference>
<dbReference type="GO" id="GO:0036126">
    <property type="term" value="C:sperm flagellum"/>
    <property type="evidence" value="ECO:0000250"/>
    <property type="project" value="UniProtKB"/>
</dbReference>
<dbReference type="GO" id="GO:0097225">
    <property type="term" value="C:sperm midpiece"/>
    <property type="evidence" value="ECO:0000250"/>
    <property type="project" value="UniProtKB"/>
</dbReference>
<dbReference type="GO" id="GO:0097228">
    <property type="term" value="C:sperm principal piece"/>
    <property type="evidence" value="ECO:0000250"/>
    <property type="project" value="UniProtKB"/>
</dbReference>
<dbReference type="GO" id="GO:0000922">
    <property type="term" value="C:spindle pole"/>
    <property type="evidence" value="ECO:0007669"/>
    <property type="project" value="UniProtKB-SubCell"/>
</dbReference>
<dbReference type="GO" id="GO:0030154">
    <property type="term" value="P:cell differentiation"/>
    <property type="evidence" value="ECO:0007669"/>
    <property type="project" value="UniProtKB-KW"/>
</dbReference>
<dbReference type="GO" id="GO:1902017">
    <property type="term" value="P:regulation of cilium assembly"/>
    <property type="evidence" value="ECO:0007669"/>
    <property type="project" value="TreeGrafter"/>
</dbReference>
<dbReference type="GO" id="GO:0007283">
    <property type="term" value="P:spermatogenesis"/>
    <property type="evidence" value="ECO:0007669"/>
    <property type="project" value="UniProtKB-KW"/>
</dbReference>
<dbReference type="InterPro" id="IPR026099">
    <property type="entry name" value="Odf2-rel"/>
</dbReference>
<dbReference type="PANTHER" id="PTHR23162">
    <property type="entry name" value="OUTER DENSE FIBER OF SPERM TAILS 2"/>
    <property type="match status" value="1"/>
</dbReference>
<dbReference type="PANTHER" id="PTHR23162:SF8">
    <property type="entry name" value="OUTER DENSE FIBER PROTEIN 2"/>
    <property type="match status" value="1"/>
</dbReference>